<protein>
    <recommendedName>
        <fullName evidence="1">HTH-type transcriptional repressor NsrR</fullName>
    </recommendedName>
</protein>
<keyword id="KW-0001">2Fe-2S</keyword>
<keyword id="KW-0238">DNA-binding</keyword>
<keyword id="KW-0408">Iron</keyword>
<keyword id="KW-0411">Iron-sulfur</keyword>
<keyword id="KW-0479">Metal-binding</keyword>
<keyword id="KW-1185">Reference proteome</keyword>
<keyword id="KW-0678">Repressor</keyword>
<keyword id="KW-0804">Transcription</keyword>
<keyword id="KW-0805">Transcription regulation</keyword>
<feature type="chain" id="PRO_0000268954" description="HTH-type transcriptional repressor NsrR">
    <location>
        <begin position="1"/>
        <end position="141"/>
    </location>
</feature>
<feature type="domain" description="HTH rrf2-type" evidence="1">
    <location>
        <begin position="2"/>
        <end position="129"/>
    </location>
</feature>
<feature type="DNA-binding region" description="H-T-H motif" evidence="1">
    <location>
        <begin position="28"/>
        <end position="51"/>
    </location>
</feature>
<feature type="binding site" evidence="1">
    <location>
        <position position="91"/>
    </location>
    <ligand>
        <name>[2Fe-2S] cluster</name>
        <dbReference type="ChEBI" id="CHEBI:190135"/>
    </ligand>
</feature>
<feature type="binding site" evidence="1">
    <location>
        <position position="96"/>
    </location>
    <ligand>
        <name>[2Fe-2S] cluster</name>
        <dbReference type="ChEBI" id="CHEBI:190135"/>
    </ligand>
</feature>
<feature type="binding site" evidence="1">
    <location>
        <position position="102"/>
    </location>
    <ligand>
        <name>[2Fe-2S] cluster</name>
        <dbReference type="ChEBI" id="CHEBI:190135"/>
    </ligand>
</feature>
<evidence type="ECO:0000255" key="1">
    <source>
        <dbReference type="HAMAP-Rule" id="MF_01177"/>
    </source>
</evidence>
<evidence type="ECO:0000305" key="2"/>
<gene>
    <name evidence="1" type="primary">nsrR</name>
    <name type="ordered locus">YPO0379</name>
    <name type="ordered locus">y0636</name>
    <name type="ordered locus">YP_0535</name>
</gene>
<dbReference type="EMBL" id="AL590842">
    <property type="protein sequence ID" value="CAL19061.1"/>
    <property type="molecule type" value="Genomic_DNA"/>
</dbReference>
<dbReference type="EMBL" id="AE009952">
    <property type="protein sequence ID" value="AAM84224.1"/>
    <property type="status" value="ALT_INIT"/>
    <property type="molecule type" value="Genomic_DNA"/>
</dbReference>
<dbReference type="EMBL" id="AE017042">
    <property type="protein sequence ID" value="AAS60805.1"/>
    <property type="status" value="ALT_INIT"/>
    <property type="molecule type" value="Genomic_DNA"/>
</dbReference>
<dbReference type="PIR" id="AC0047">
    <property type="entry name" value="AC0047"/>
</dbReference>
<dbReference type="RefSeq" id="WP_002217229.1">
    <property type="nucleotide sequence ID" value="NZ_WUCM01000083.1"/>
</dbReference>
<dbReference type="RefSeq" id="YP_002345457.1">
    <property type="nucleotide sequence ID" value="NC_003143.1"/>
</dbReference>
<dbReference type="SMR" id="Q0WJT1"/>
<dbReference type="STRING" id="214092.YPO0379"/>
<dbReference type="PaxDb" id="214092-YPO0379"/>
<dbReference type="EnsemblBacteria" id="AAS60805">
    <property type="protein sequence ID" value="AAS60805"/>
    <property type="gene ID" value="YP_0535"/>
</dbReference>
<dbReference type="GeneID" id="57974228"/>
<dbReference type="KEGG" id="ype:YPO0379"/>
<dbReference type="KEGG" id="ypj:CH55_3384"/>
<dbReference type="KEGG" id="ypk:y0636"/>
<dbReference type="KEGG" id="ypl:CH46_535"/>
<dbReference type="KEGG" id="ypm:YP_0535"/>
<dbReference type="KEGG" id="ypv:BZ15_3192"/>
<dbReference type="KEGG" id="ypw:CH59_1482"/>
<dbReference type="PATRIC" id="fig|214092.21.peg.616"/>
<dbReference type="eggNOG" id="COG1959">
    <property type="taxonomic scope" value="Bacteria"/>
</dbReference>
<dbReference type="HOGENOM" id="CLU_107144_2_1_6"/>
<dbReference type="OMA" id="AQEAFYA"/>
<dbReference type="OrthoDB" id="9795923at2"/>
<dbReference type="Proteomes" id="UP000000815">
    <property type="component" value="Chromosome"/>
</dbReference>
<dbReference type="Proteomes" id="UP000001019">
    <property type="component" value="Chromosome"/>
</dbReference>
<dbReference type="Proteomes" id="UP000002490">
    <property type="component" value="Chromosome"/>
</dbReference>
<dbReference type="GO" id="GO:0005829">
    <property type="term" value="C:cytosol"/>
    <property type="evidence" value="ECO:0000318"/>
    <property type="project" value="GO_Central"/>
</dbReference>
<dbReference type="GO" id="GO:0051537">
    <property type="term" value="F:2 iron, 2 sulfur cluster binding"/>
    <property type="evidence" value="ECO:0007669"/>
    <property type="project" value="UniProtKB-KW"/>
</dbReference>
<dbReference type="GO" id="GO:0003700">
    <property type="term" value="F:DNA-binding transcription factor activity"/>
    <property type="evidence" value="ECO:0000318"/>
    <property type="project" value="GO_Central"/>
</dbReference>
<dbReference type="GO" id="GO:0003690">
    <property type="term" value="F:double-stranded DNA binding"/>
    <property type="evidence" value="ECO:0007669"/>
    <property type="project" value="UniProtKB-UniRule"/>
</dbReference>
<dbReference type="GO" id="GO:0005506">
    <property type="term" value="F:iron ion binding"/>
    <property type="evidence" value="ECO:0007669"/>
    <property type="project" value="UniProtKB-UniRule"/>
</dbReference>
<dbReference type="GO" id="GO:0045892">
    <property type="term" value="P:negative regulation of DNA-templated transcription"/>
    <property type="evidence" value="ECO:0007669"/>
    <property type="project" value="InterPro"/>
</dbReference>
<dbReference type="GO" id="GO:0006355">
    <property type="term" value="P:regulation of DNA-templated transcription"/>
    <property type="evidence" value="ECO:0000318"/>
    <property type="project" value="GO_Central"/>
</dbReference>
<dbReference type="FunFam" id="1.10.10.10:FF:000105">
    <property type="entry name" value="HTH-type transcriptional repressor NsrR"/>
    <property type="match status" value="1"/>
</dbReference>
<dbReference type="Gene3D" id="1.10.10.10">
    <property type="entry name" value="Winged helix-like DNA-binding domain superfamily/Winged helix DNA-binding domain"/>
    <property type="match status" value="1"/>
</dbReference>
<dbReference type="HAMAP" id="MF_01177">
    <property type="entry name" value="HTH_type_NsrR"/>
    <property type="match status" value="1"/>
</dbReference>
<dbReference type="InterPro" id="IPR030489">
    <property type="entry name" value="TR_Rrf2-type_CS"/>
</dbReference>
<dbReference type="InterPro" id="IPR000944">
    <property type="entry name" value="Tscrpt_reg_Rrf2"/>
</dbReference>
<dbReference type="InterPro" id="IPR023761">
    <property type="entry name" value="Tscrpt_rep_HTH_NsrR"/>
</dbReference>
<dbReference type="InterPro" id="IPR036388">
    <property type="entry name" value="WH-like_DNA-bd_sf"/>
</dbReference>
<dbReference type="InterPro" id="IPR036390">
    <property type="entry name" value="WH_DNA-bd_sf"/>
</dbReference>
<dbReference type="NCBIfam" id="NF008240">
    <property type="entry name" value="PRK11014.1"/>
    <property type="match status" value="1"/>
</dbReference>
<dbReference type="NCBIfam" id="TIGR00738">
    <property type="entry name" value="rrf2_super"/>
    <property type="match status" value="1"/>
</dbReference>
<dbReference type="PANTHER" id="PTHR33221:SF4">
    <property type="entry name" value="HTH-TYPE TRANSCRIPTIONAL REPRESSOR NSRR"/>
    <property type="match status" value="1"/>
</dbReference>
<dbReference type="PANTHER" id="PTHR33221">
    <property type="entry name" value="WINGED HELIX-TURN-HELIX TRANSCRIPTIONAL REGULATOR, RRF2 FAMILY"/>
    <property type="match status" value="1"/>
</dbReference>
<dbReference type="Pfam" id="PF02082">
    <property type="entry name" value="Rrf2"/>
    <property type="match status" value="1"/>
</dbReference>
<dbReference type="SUPFAM" id="SSF46785">
    <property type="entry name" value="Winged helix' DNA-binding domain"/>
    <property type="match status" value="1"/>
</dbReference>
<dbReference type="PROSITE" id="PS01332">
    <property type="entry name" value="HTH_RRF2_1"/>
    <property type="match status" value="1"/>
</dbReference>
<dbReference type="PROSITE" id="PS51197">
    <property type="entry name" value="HTH_RRF2_2"/>
    <property type="match status" value="1"/>
</dbReference>
<name>NSRR_YERPE</name>
<proteinExistence type="inferred from homology"/>
<accession>Q0WJT1</accession>
<accession>Q74XB1</accession>
<accession>Q8D1E2</accession>
<sequence length="141" mass="15645">MQLTSFTDYGLRALIYMASLPDGQMTSISQVTEVYGVSRNHMVKIINQLSRVGLVTAVRGKNGGIRLGKPADQILIGDVVRQMEPLTLVNCSSDFCHITPACRLKQVLNQAVQSFLKELDNYTLADMVKDNSPLYKLLLVE</sequence>
<comment type="function">
    <text evidence="1">Nitric oxide-sensitive repressor of genes involved in protecting the cell against nitrosative stress. May require iron for activity.</text>
</comment>
<comment type="cofactor">
    <cofactor evidence="1">
        <name>[2Fe-2S] cluster</name>
        <dbReference type="ChEBI" id="CHEBI:190135"/>
    </cofactor>
    <text evidence="1">Binds 1 [2Fe-2S] cluster per subunit.</text>
</comment>
<comment type="sequence caution" evidence="2">
    <conflict type="erroneous initiation">
        <sequence resource="EMBL-CDS" id="AAM84224"/>
    </conflict>
</comment>
<comment type="sequence caution" evidence="2">
    <conflict type="erroneous initiation">
        <sequence resource="EMBL-CDS" id="AAS60805"/>
    </conflict>
</comment>
<organism>
    <name type="scientific">Yersinia pestis</name>
    <dbReference type="NCBI Taxonomy" id="632"/>
    <lineage>
        <taxon>Bacteria</taxon>
        <taxon>Pseudomonadati</taxon>
        <taxon>Pseudomonadota</taxon>
        <taxon>Gammaproteobacteria</taxon>
        <taxon>Enterobacterales</taxon>
        <taxon>Yersiniaceae</taxon>
        <taxon>Yersinia</taxon>
    </lineage>
</organism>
<reference key="1">
    <citation type="journal article" date="2001" name="Nature">
        <title>Genome sequence of Yersinia pestis, the causative agent of plague.</title>
        <authorList>
            <person name="Parkhill J."/>
            <person name="Wren B.W."/>
            <person name="Thomson N.R."/>
            <person name="Titball R.W."/>
            <person name="Holden M.T.G."/>
            <person name="Prentice M.B."/>
            <person name="Sebaihia M."/>
            <person name="James K.D."/>
            <person name="Churcher C.M."/>
            <person name="Mungall K.L."/>
            <person name="Baker S."/>
            <person name="Basham D."/>
            <person name="Bentley S.D."/>
            <person name="Brooks K."/>
            <person name="Cerdeno-Tarraga A.-M."/>
            <person name="Chillingworth T."/>
            <person name="Cronin A."/>
            <person name="Davies R.M."/>
            <person name="Davis P."/>
            <person name="Dougan G."/>
            <person name="Feltwell T."/>
            <person name="Hamlin N."/>
            <person name="Holroyd S."/>
            <person name="Jagels K."/>
            <person name="Karlyshev A.V."/>
            <person name="Leather S."/>
            <person name="Moule S."/>
            <person name="Oyston P.C.F."/>
            <person name="Quail M.A."/>
            <person name="Rutherford K.M."/>
            <person name="Simmonds M."/>
            <person name="Skelton J."/>
            <person name="Stevens K."/>
            <person name="Whitehead S."/>
            <person name="Barrell B.G."/>
        </authorList>
    </citation>
    <scope>NUCLEOTIDE SEQUENCE [LARGE SCALE GENOMIC DNA]</scope>
    <source>
        <strain>CO-92 / Biovar Orientalis</strain>
    </source>
</reference>
<reference key="2">
    <citation type="journal article" date="2002" name="J. Bacteriol.">
        <title>Genome sequence of Yersinia pestis KIM.</title>
        <authorList>
            <person name="Deng W."/>
            <person name="Burland V."/>
            <person name="Plunkett G. III"/>
            <person name="Boutin A."/>
            <person name="Mayhew G.F."/>
            <person name="Liss P."/>
            <person name="Perna N.T."/>
            <person name="Rose D.J."/>
            <person name="Mau B."/>
            <person name="Zhou S."/>
            <person name="Schwartz D.C."/>
            <person name="Fetherston J.D."/>
            <person name="Lindler L.E."/>
            <person name="Brubaker R.R."/>
            <person name="Plano G.V."/>
            <person name="Straley S.C."/>
            <person name="McDonough K.A."/>
            <person name="Nilles M.L."/>
            <person name="Matson J.S."/>
            <person name="Blattner F.R."/>
            <person name="Perry R.D."/>
        </authorList>
    </citation>
    <scope>NUCLEOTIDE SEQUENCE [LARGE SCALE GENOMIC DNA]</scope>
    <source>
        <strain>KIM10+ / Biovar Mediaevalis</strain>
    </source>
</reference>
<reference key="3">
    <citation type="journal article" date="2004" name="DNA Res.">
        <title>Complete genome sequence of Yersinia pestis strain 91001, an isolate avirulent to humans.</title>
        <authorList>
            <person name="Song Y."/>
            <person name="Tong Z."/>
            <person name="Wang J."/>
            <person name="Wang L."/>
            <person name="Guo Z."/>
            <person name="Han Y."/>
            <person name="Zhang J."/>
            <person name="Pei D."/>
            <person name="Zhou D."/>
            <person name="Qin H."/>
            <person name="Pang X."/>
            <person name="Han Y."/>
            <person name="Zhai J."/>
            <person name="Li M."/>
            <person name="Cui B."/>
            <person name="Qi Z."/>
            <person name="Jin L."/>
            <person name="Dai R."/>
            <person name="Chen F."/>
            <person name="Li S."/>
            <person name="Ye C."/>
            <person name="Du Z."/>
            <person name="Lin W."/>
            <person name="Wang J."/>
            <person name="Yu J."/>
            <person name="Yang H."/>
            <person name="Wang J."/>
            <person name="Huang P."/>
            <person name="Yang R."/>
        </authorList>
    </citation>
    <scope>NUCLEOTIDE SEQUENCE [LARGE SCALE GENOMIC DNA]</scope>
    <source>
        <strain>91001 / Biovar Mediaevalis</strain>
    </source>
</reference>